<name>RPOB_TRICV</name>
<reference key="1">
    <citation type="journal article" date="1995" name="Plant Mol. Biol. Rep.">
        <title>The chloroplast genome of a chlorophyll a+c-containing alga, Odontella sinensis.</title>
        <authorList>
            <person name="Kowallik K.V."/>
            <person name="Stoebe B."/>
            <person name="Schaffran I."/>
            <person name="Kroth-Pancic P."/>
            <person name="Freier U."/>
        </authorList>
    </citation>
    <scope>NUCLEOTIDE SEQUENCE [LARGE SCALE GENOMIC DNA]</scope>
</reference>
<comment type="function">
    <text evidence="1">DNA-dependent RNA polymerase catalyzes the transcription of DNA into RNA using the four ribonucleoside triphosphates as substrates.</text>
</comment>
<comment type="catalytic activity">
    <reaction evidence="1">
        <text>RNA(n) + a ribonucleoside 5'-triphosphate = RNA(n+1) + diphosphate</text>
        <dbReference type="Rhea" id="RHEA:21248"/>
        <dbReference type="Rhea" id="RHEA-COMP:14527"/>
        <dbReference type="Rhea" id="RHEA-COMP:17342"/>
        <dbReference type="ChEBI" id="CHEBI:33019"/>
        <dbReference type="ChEBI" id="CHEBI:61557"/>
        <dbReference type="ChEBI" id="CHEBI:140395"/>
        <dbReference type="EC" id="2.7.7.6"/>
    </reaction>
</comment>
<comment type="subunit">
    <text evidence="1">In plastids the minimal PEP RNA polymerase catalytic core is composed of four subunits: alpha, beta, beta', and beta''. When a (nuclear-encoded) sigma factor is associated with the core the holoenzyme is formed, which can initiate transcription.</text>
</comment>
<comment type="subcellular location">
    <subcellularLocation>
        <location>Plastid</location>
        <location>Chloroplast</location>
    </subcellularLocation>
</comment>
<comment type="similarity">
    <text evidence="1">Belongs to the RNA polymerase beta chain family.</text>
</comment>
<organism>
    <name type="scientific">Trieres chinensis</name>
    <name type="common">Marine centric diatom</name>
    <name type="synonym">Odontella sinensis</name>
    <dbReference type="NCBI Taxonomy" id="1514140"/>
    <lineage>
        <taxon>Eukaryota</taxon>
        <taxon>Sar</taxon>
        <taxon>Stramenopiles</taxon>
        <taxon>Ochrophyta</taxon>
        <taxon>Bacillariophyta</taxon>
        <taxon>Mediophyceae</taxon>
        <taxon>Biddulphiophycidae</taxon>
        <taxon>Eupodiscales</taxon>
        <taxon>Parodontellaceae</taxon>
        <taxon>Trieres</taxon>
    </lineage>
</organism>
<evidence type="ECO:0000255" key="1">
    <source>
        <dbReference type="HAMAP-Rule" id="MF_01321"/>
    </source>
</evidence>
<sequence>MNYSTALPDFIEMQRVSFCWFIAQGLNDELTMFSRIHDFSYNTEYRLFGQEYSLVKPVYTIVRAKKLAANYSVQLVIPLEVRNKKLNSVRYFGQFTIINLPLMTTTATFVINGCERVIVSQIIRSPGIYFEKNKNHRKRKQFKSQVLGHASKLGSFLPSGVPWIIPYDQPWKPWIIGKKLGYSKYNSNKDTKLDFYFYSLKSFKIYQKISKITNSPIKVQRIKLFLQWLKLNQKEFNFKNKLNLSELSFLLNYWNFIFKFIIKYQFLYKKNFEESYQIQESEFKTIFKTWNNQPQLNDSFSLKKIDQLTSNYEKKIQFYHNVIQQQFFDNLMLVPFITKEKKILNLESLANRQKQKKISLTLLTNESIKFAFYFSPSLKEVFKYRSPKKRKPKEAKIKQPILYLRSPSKIVQFKDDHQVLDSYKKKYDTKDFYTATLIPESGSWIRFGFQKNTKINRYQYPIRHQEDEVIIQIDKITQKPILYLLKEMGLTDWEICSNLKHADFFYFTKPFLTGSLTSKQPLPRFDLHSDYYKNISEFSHIFDARYYRLGKIGRFQINNRLNLKLNNRIYTITYEDIFAILDCLVTLSISKTTGDDIDHLKNRRVRSVGELLQNLFRVGFQRLVRKLGSQINKRESGQISSFNIIGATVREFFGSSQLSQYMDQTNPLSSLTHRRRISGLGPGGLDRDRISFAVRDIHPSHYGRICPIETPEGPNVGLIASLTTCARVNKLGFIETPFWRVINGKVIKTGNPIYLTADIEDFYKIAPADISTNSKNYLTQNLIPVRYKQDFITVSPFQVDFISISPIQVVSVATSLIPFFEHDDANRALMGSNMQRQSVPLMLSQKPIVGTGLENQIAIDSGMTINAQGAGIVHSVTADYIIVKEYSGRKLKYILQKYQRSNQETCINHRPIVWKGEKIKSGQILTDGPGITNNELALGQNVLVAYMPWQGYNFEDAILINERLVYEDVFTSIHIERYDIEIEQDDDVSEQITKNIPNLSFSEIQNLNDDGIVALGTFVKPGDILVGKIIAKNDSEQLPEAKLLRAIFGAKAKGVRDTSFRMPKGKYGRVVDRVTFNRKTKLAYKFEKIQVFIAQIRKIKVGDKIAGRHGNKGIISRILPRQDMPFLPDGTPVDIILNPLGVPSRMNVGQLYECLLGIAGHKLNRRFKILPFDEMYGPEVSRILINKKLRQASIENDEAWLFNPYSPGKMVLIDGRTGKEFENPITVGNAYMLKLIHLVDDKMHARATGPYSLITQQPLGGKAQHGGQRFGEMEVWALEGFGAAFTLKELLTIKSDDMQGRNETLNAIVKGQLIPKSGVPESFKVLLQELRSIGLDMSTYKIENYNLNQHYELEVDLIETYDSLEKTFPPTSNLDDISF</sequence>
<feature type="chain" id="PRO_0000048034" description="DNA-directed RNA polymerase subunit beta">
    <location>
        <begin position="1"/>
        <end position="1379"/>
    </location>
</feature>
<geneLocation type="chloroplast"/>
<gene>
    <name evidence="1" type="primary">rpoB</name>
</gene>
<proteinExistence type="inferred from homology"/>
<accession>P49466</accession>
<keyword id="KW-0150">Chloroplast</keyword>
<keyword id="KW-0240">DNA-directed RNA polymerase</keyword>
<keyword id="KW-0548">Nucleotidyltransferase</keyword>
<keyword id="KW-0934">Plastid</keyword>
<keyword id="KW-0804">Transcription</keyword>
<keyword id="KW-0808">Transferase</keyword>
<protein>
    <recommendedName>
        <fullName evidence="1">DNA-directed RNA polymerase subunit beta</fullName>
        <ecNumber evidence="1">2.7.7.6</ecNumber>
    </recommendedName>
    <alternativeName>
        <fullName evidence="1">PEP</fullName>
    </alternativeName>
    <alternativeName>
        <fullName evidence="1">Plastid-encoded RNA polymerase subunit beta</fullName>
        <shortName evidence="1">RNA polymerase subunit beta</shortName>
    </alternativeName>
</protein>
<dbReference type="EC" id="2.7.7.6" evidence="1"/>
<dbReference type="EMBL" id="Z67753">
    <property type="protein sequence ID" value="CAA91744.1"/>
    <property type="molecule type" value="Genomic_DNA"/>
</dbReference>
<dbReference type="PIR" id="S78371">
    <property type="entry name" value="S78371"/>
</dbReference>
<dbReference type="RefSeq" id="NP_043712.1">
    <property type="nucleotide sequence ID" value="NC_001713.1"/>
</dbReference>
<dbReference type="SMR" id="P49466"/>
<dbReference type="GeneID" id="801781"/>
<dbReference type="GO" id="GO:0009507">
    <property type="term" value="C:chloroplast"/>
    <property type="evidence" value="ECO:0007669"/>
    <property type="project" value="UniProtKB-SubCell"/>
</dbReference>
<dbReference type="GO" id="GO:0000428">
    <property type="term" value="C:DNA-directed RNA polymerase complex"/>
    <property type="evidence" value="ECO:0007669"/>
    <property type="project" value="UniProtKB-KW"/>
</dbReference>
<dbReference type="GO" id="GO:0005739">
    <property type="term" value="C:mitochondrion"/>
    <property type="evidence" value="ECO:0007669"/>
    <property type="project" value="GOC"/>
</dbReference>
<dbReference type="GO" id="GO:0003677">
    <property type="term" value="F:DNA binding"/>
    <property type="evidence" value="ECO:0007669"/>
    <property type="project" value="UniProtKB-UniRule"/>
</dbReference>
<dbReference type="GO" id="GO:0003899">
    <property type="term" value="F:DNA-directed RNA polymerase activity"/>
    <property type="evidence" value="ECO:0007669"/>
    <property type="project" value="UniProtKB-UniRule"/>
</dbReference>
<dbReference type="GO" id="GO:0032549">
    <property type="term" value="F:ribonucleoside binding"/>
    <property type="evidence" value="ECO:0007669"/>
    <property type="project" value="InterPro"/>
</dbReference>
<dbReference type="GO" id="GO:0006351">
    <property type="term" value="P:DNA-templated transcription"/>
    <property type="evidence" value="ECO:0007669"/>
    <property type="project" value="UniProtKB-UniRule"/>
</dbReference>
<dbReference type="CDD" id="cd00653">
    <property type="entry name" value="RNA_pol_B_RPB2"/>
    <property type="match status" value="1"/>
</dbReference>
<dbReference type="Gene3D" id="2.40.50.100">
    <property type="match status" value="1"/>
</dbReference>
<dbReference type="Gene3D" id="2.40.50.150">
    <property type="match status" value="1"/>
</dbReference>
<dbReference type="Gene3D" id="3.90.1100.10">
    <property type="match status" value="2"/>
</dbReference>
<dbReference type="Gene3D" id="2.30.150.10">
    <property type="entry name" value="DNA-directed RNA polymerase, beta subunit, external 1 domain"/>
    <property type="match status" value="1"/>
</dbReference>
<dbReference type="Gene3D" id="2.40.270.10">
    <property type="entry name" value="DNA-directed RNA polymerase, subunit 2, domain 6"/>
    <property type="match status" value="1"/>
</dbReference>
<dbReference type="Gene3D" id="3.90.1800.10">
    <property type="entry name" value="RNA polymerase alpha subunit dimerisation domain"/>
    <property type="match status" value="1"/>
</dbReference>
<dbReference type="Gene3D" id="3.90.1110.10">
    <property type="entry name" value="RNA polymerase Rpb2, domain 2"/>
    <property type="match status" value="1"/>
</dbReference>
<dbReference type="HAMAP" id="MF_01321">
    <property type="entry name" value="RNApol_bact_RpoB"/>
    <property type="match status" value="1"/>
</dbReference>
<dbReference type="InterPro" id="IPR042107">
    <property type="entry name" value="DNA-dir_RNA_pol_bsu_ext_1_sf"/>
</dbReference>
<dbReference type="InterPro" id="IPR019462">
    <property type="entry name" value="DNA-dir_RNA_pol_bsu_external_1"/>
</dbReference>
<dbReference type="InterPro" id="IPR015712">
    <property type="entry name" value="DNA-dir_RNA_pol_su2"/>
</dbReference>
<dbReference type="InterPro" id="IPR007120">
    <property type="entry name" value="DNA-dir_RNAP_su2_dom"/>
</dbReference>
<dbReference type="InterPro" id="IPR037033">
    <property type="entry name" value="DNA-dir_RNAP_su2_hyb_sf"/>
</dbReference>
<dbReference type="InterPro" id="IPR010243">
    <property type="entry name" value="RNA_pol_bsu_bac"/>
</dbReference>
<dbReference type="InterPro" id="IPR007121">
    <property type="entry name" value="RNA_pol_bsu_CS"/>
</dbReference>
<dbReference type="InterPro" id="IPR007644">
    <property type="entry name" value="RNA_pol_bsu_protrusion"/>
</dbReference>
<dbReference type="InterPro" id="IPR007642">
    <property type="entry name" value="RNA_pol_Rpb2_2"/>
</dbReference>
<dbReference type="InterPro" id="IPR037034">
    <property type="entry name" value="RNA_pol_Rpb2_2_sf"/>
</dbReference>
<dbReference type="InterPro" id="IPR007645">
    <property type="entry name" value="RNA_pol_Rpb2_3"/>
</dbReference>
<dbReference type="InterPro" id="IPR007641">
    <property type="entry name" value="RNA_pol_Rpb2_7"/>
</dbReference>
<dbReference type="InterPro" id="IPR014724">
    <property type="entry name" value="RNA_pol_RPB2_OB-fold"/>
</dbReference>
<dbReference type="NCBIfam" id="NF001616">
    <property type="entry name" value="PRK00405.1"/>
    <property type="match status" value="1"/>
</dbReference>
<dbReference type="PANTHER" id="PTHR20856">
    <property type="entry name" value="DNA-DIRECTED RNA POLYMERASE I SUBUNIT 2"/>
    <property type="match status" value="1"/>
</dbReference>
<dbReference type="Pfam" id="PF04563">
    <property type="entry name" value="RNA_pol_Rpb2_1"/>
    <property type="match status" value="1"/>
</dbReference>
<dbReference type="Pfam" id="PF04561">
    <property type="entry name" value="RNA_pol_Rpb2_2"/>
    <property type="match status" value="1"/>
</dbReference>
<dbReference type="Pfam" id="PF04565">
    <property type="entry name" value="RNA_pol_Rpb2_3"/>
    <property type="match status" value="1"/>
</dbReference>
<dbReference type="Pfam" id="PF10385">
    <property type="entry name" value="RNA_pol_Rpb2_45"/>
    <property type="match status" value="1"/>
</dbReference>
<dbReference type="Pfam" id="PF00562">
    <property type="entry name" value="RNA_pol_Rpb2_6"/>
    <property type="match status" value="1"/>
</dbReference>
<dbReference type="Pfam" id="PF04560">
    <property type="entry name" value="RNA_pol_Rpb2_7"/>
    <property type="match status" value="1"/>
</dbReference>
<dbReference type="SUPFAM" id="SSF64484">
    <property type="entry name" value="beta and beta-prime subunits of DNA dependent RNA-polymerase"/>
    <property type="match status" value="2"/>
</dbReference>
<dbReference type="PROSITE" id="PS01166">
    <property type="entry name" value="RNA_POL_BETA"/>
    <property type="match status" value="1"/>
</dbReference>